<reference key="1">
    <citation type="journal article" date="2000" name="Nature">
        <title>Complete DNA sequence of a serogroup A strain of Neisseria meningitidis Z2491.</title>
        <authorList>
            <person name="Parkhill J."/>
            <person name="Achtman M."/>
            <person name="James K.D."/>
            <person name="Bentley S.D."/>
            <person name="Churcher C.M."/>
            <person name="Klee S.R."/>
            <person name="Morelli G."/>
            <person name="Basham D."/>
            <person name="Brown D."/>
            <person name="Chillingworth T."/>
            <person name="Davies R.M."/>
            <person name="Davis P."/>
            <person name="Devlin K."/>
            <person name="Feltwell T."/>
            <person name="Hamlin N."/>
            <person name="Holroyd S."/>
            <person name="Jagels K."/>
            <person name="Leather S."/>
            <person name="Moule S."/>
            <person name="Mungall K.L."/>
            <person name="Quail M.A."/>
            <person name="Rajandream M.A."/>
            <person name="Rutherford K.M."/>
            <person name="Simmonds M."/>
            <person name="Skelton J."/>
            <person name="Whitehead S."/>
            <person name="Spratt B.G."/>
            <person name="Barrell B.G."/>
        </authorList>
    </citation>
    <scope>NUCLEOTIDE SEQUENCE [LARGE SCALE GENOMIC DNA]</scope>
    <source>
        <strain>DSM 15465 / Z2491</strain>
    </source>
</reference>
<evidence type="ECO:0000255" key="1"/>
<evidence type="ECO:0000305" key="2"/>
<sequence>MNTRPFYFGLIFIAIIAILANYLGNTDFSHHYHISALIIAILLGMAIGNTIYPQFSTQVEKGVLFAKGALLRTGIVLYGFRLTFGDIADVGLNAVVTDAIMLISTFFFTVLLGIRYLKMDKQLVYLTGAGCSICGAAAVMAAESVTKAESHKVSVAIAIVVIFGTLAIFTYPLFYTWSQDLINAHQFGIYVGSSVHEVAQVYAIGENIDPIVANTAVISKMIRVMMLAPFLLMLSWLLTRSDGVSENTSHKITIPWFAVLFIGVAIFNSFDLLPKELVKLFVEIDSFLLISSMAALGLTTHASAIKKAGLKPFVLGILTYLWLVVGGFLVNYGISKLI</sequence>
<comment type="subcellular location">
    <subcellularLocation>
        <location evidence="2">Cell membrane</location>
        <topology evidence="2">Multi-pass membrane protein</topology>
    </subcellularLocation>
</comment>
<comment type="similarity">
    <text evidence="2">Belongs to the UPF0324 family.</text>
</comment>
<feature type="chain" id="PRO_0000157429" description="UPF0324 membrane protein NMA0465">
    <location>
        <begin position="1"/>
        <end position="338"/>
    </location>
</feature>
<feature type="transmembrane region" description="Helical" evidence="1">
    <location>
        <begin position="5"/>
        <end position="23"/>
    </location>
</feature>
<feature type="transmembrane region" description="Helical" evidence="1">
    <location>
        <begin position="33"/>
        <end position="55"/>
    </location>
</feature>
<feature type="transmembrane region" description="Helical" evidence="1">
    <location>
        <begin position="62"/>
        <end position="84"/>
    </location>
</feature>
<feature type="transmembrane region" description="Helical" evidence="1">
    <location>
        <begin position="94"/>
        <end position="116"/>
    </location>
</feature>
<feature type="transmembrane region" description="Helical" evidence="1">
    <location>
        <begin position="123"/>
        <end position="145"/>
    </location>
</feature>
<feature type="transmembrane region" description="Helical" evidence="1">
    <location>
        <begin position="155"/>
        <end position="177"/>
    </location>
</feature>
<feature type="transmembrane region" description="Helical" evidence="1">
    <location>
        <begin position="222"/>
        <end position="239"/>
    </location>
</feature>
<feature type="transmembrane region" description="Helical" evidence="1">
    <location>
        <begin position="254"/>
        <end position="273"/>
    </location>
</feature>
<feature type="transmembrane region" description="Helical" evidence="1">
    <location>
        <begin position="280"/>
        <end position="302"/>
    </location>
</feature>
<feature type="transmembrane region" description="Helical" evidence="1">
    <location>
        <begin position="312"/>
        <end position="334"/>
    </location>
</feature>
<keyword id="KW-1003">Cell membrane</keyword>
<keyword id="KW-0472">Membrane</keyword>
<keyword id="KW-0812">Transmembrane</keyword>
<keyword id="KW-1133">Transmembrane helix</keyword>
<organism>
    <name type="scientific">Neisseria meningitidis serogroup A / serotype 4A (strain DSM 15465 / Z2491)</name>
    <dbReference type="NCBI Taxonomy" id="122587"/>
    <lineage>
        <taxon>Bacteria</taxon>
        <taxon>Pseudomonadati</taxon>
        <taxon>Pseudomonadota</taxon>
        <taxon>Betaproteobacteria</taxon>
        <taxon>Neisseriales</taxon>
        <taxon>Neisseriaceae</taxon>
        <taxon>Neisseria</taxon>
    </lineage>
</organism>
<protein>
    <recommendedName>
        <fullName>UPF0324 membrane protein NMA0465</fullName>
    </recommendedName>
</protein>
<name>Y465_NEIMA</name>
<proteinExistence type="inferred from homology"/>
<dbReference type="EMBL" id="AL157959">
    <property type="protein sequence ID" value="CAM07747.1"/>
    <property type="molecule type" value="Genomic_DNA"/>
</dbReference>
<dbReference type="PIR" id="A81964">
    <property type="entry name" value="A81964"/>
</dbReference>
<dbReference type="RefSeq" id="WP_002233159.1">
    <property type="nucleotide sequence ID" value="NC_003116.1"/>
</dbReference>
<dbReference type="EnsemblBacteria" id="CAM07747">
    <property type="protein sequence ID" value="CAM07747"/>
    <property type="gene ID" value="NMA0465"/>
</dbReference>
<dbReference type="KEGG" id="nma:NMA0465"/>
<dbReference type="HOGENOM" id="CLU_033541_0_0_4"/>
<dbReference type="Proteomes" id="UP000000626">
    <property type="component" value="Chromosome"/>
</dbReference>
<dbReference type="GO" id="GO:0005886">
    <property type="term" value="C:plasma membrane"/>
    <property type="evidence" value="ECO:0007669"/>
    <property type="project" value="UniProtKB-SubCell"/>
</dbReference>
<dbReference type="InterPro" id="IPR018383">
    <property type="entry name" value="UPF0324_pro"/>
</dbReference>
<dbReference type="InterPro" id="IPR004630">
    <property type="entry name" value="UPF0324_YeiH-like"/>
</dbReference>
<dbReference type="NCBIfam" id="TIGR00698">
    <property type="entry name" value="YeiH family putative sulfate export transporter"/>
    <property type="match status" value="1"/>
</dbReference>
<dbReference type="PANTHER" id="PTHR30106">
    <property type="entry name" value="INNER MEMBRANE PROTEIN YEIH-RELATED"/>
    <property type="match status" value="1"/>
</dbReference>
<dbReference type="PANTHER" id="PTHR30106:SF2">
    <property type="entry name" value="UPF0324 INNER MEMBRANE PROTEIN YEIH"/>
    <property type="match status" value="1"/>
</dbReference>
<dbReference type="Pfam" id="PF03601">
    <property type="entry name" value="Cons_hypoth698"/>
    <property type="match status" value="1"/>
</dbReference>
<accession>Q9JWA8</accession>
<accession>A1IPS6</accession>
<gene>
    <name type="ordered locus">NMA0465</name>
</gene>